<gene>
    <name evidence="1" type="primary">valS</name>
    <name type="ordered locus">CT1552</name>
</gene>
<proteinExistence type="inferred from homology"/>
<accession>Q8KC74</accession>
<reference key="1">
    <citation type="journal article" date="2002" name="Proc. Natl. Acad. Sci. U.S.A.">
        <title>The complete genome sequence of Chlorobium tepidum TLS, a photosynthetic, anaerobic, green-sulfur bacterium.</title>
        <authorList>
            <person name="Eisen J.A."/>
            <person name="Nelson K.E."/>
            <person name="Paulsen I.T."/>
            <person name="Heidelberg J.F."/>
            <person name="Wu M."/>
            <person name="Dodson R.J."/>
            <person name="DeBoy R.T."/>
            <person name="Gwinn M.L."/>
            <person name="Nelson W.C."/>
            <person name="Haft D.H."/>
            <person name="Hickey E.K."/>
            <person name="Peterson J.D."/>
            <person name="Durkin A.S."/>
            <person name="Kolonay J.F."/>
            <person name="Yang F."/>
            <person name="Holt I.E."/>
            <person name="Umayam L.A."/>
            <person name="Mason T.M."/>
            <person name="Brenner M."/>
            <person name="Shea T.P."/>
            <person name="Parksey D.S."/>
            <person name="Nierman W.C."/>
            <person name="Feldblyum T.V."/>
            <person name="Hansen C.L."/>
            <person name="Craven M.B."/>
            <person name="Radune D."/>
            <person name="Vamathevan J.J."/>
            <person name="Khouri H.M."/>
            <person name="White O."/>
            <person name="Gruber T.M."/>
            <person name="Ketchum K.A."/>
            <person name="Venter J.C."/>
            <person name="Tettelin H."/>
            <person name="Bryant D.A."/>
            <person name="Fraser C.M."/>
        </authorList>
    </citation>
    <scope>NUCLEOTIDE SEQUENCE [LARGE SCALE GENOMIC DNA]</scope>
    <source>
        <strain>ATCC 49652 / DSM 12025 / NBRC 103806 / TLS</strain>
    </source>
</reference>
<comment type="function">
    <text evidence="1">Catalyzes the attachment of valine to tRNA(Val). As ValRS can inadvertently accommodate and process structurally similar amino acids such as threonine, to avoid such errors, it has a 'posttransfer' editing activity that hydrolyzes mischarged Thr-tRNA(Val) in a tRNA-dependent manner.</text>
</comment>
<comment type="catalytic activity">
    <reaction evidence="1">
        <text>tRNA(Val) + L-valine + ATP = L-valyl-tRNA(Val) + AMP + diphosphate</text>
        <dbReference type="Rhea" id="RHEA:10704"/>
        <dbReference type="Rhea" id="RHEA-COMP:9672"/>
        <dbReference type="Rhea" id="RHEA-COMP:9708"/>
        <dbReference type="ChEBI" id="CHEBI:30616"/>
        <dbReference type="ChEBI" id="CHEBI:33019"/>
        <dbReference type="ChEBI" id="CHEBI:57762"/>
        <dbReference type="ChEBI" id="CHEBI:78442"/>
        <dbReference type="ChEBI" id="CHEBI:78537"/>
        <dbReference type="ChEBI" id="CHEBI:456215"/>
        <dbReference type="EC" id="6.1.1.9"/>
    </reaction>
</comment>
<comment type="subunit">
    <text evidence="1">Monomer.</text>
</comment>
<comment type="subcellular location">
    <subcellularLocation>
        <location evidence="1">Cytoplasm</location>
    </subcellularLocation>
</comment>
<comment type="domain">
    <text evidence="1">ValRS has two distinct active sites: one for aminoacylation and one for editing. The misactivated threonine is translocated from the active site to the editing site.</text>
</comment>
<comment type="domain">
    <text evidence="1">The C-terminal coiled-coil domain is crucial for aminoacylation activity.</text>
</comment>
<comment type="similarity">
    <text evidence="1">Belongs to the class-I aminoacyl-tRNA synthetase family. ValS type 1 subfamily.</text>
</comment>
<organism>
    <name type="scientific">Chlorobaculum tepidum (strain ATCC 49652 / DSM 12025 / NBRC 103806 / TLS)</name>
    <name type="common">Chlorobium tepidum</name>
    <dbReference type="NCBI Taxonomy" id="194439"/>
    <lineage>
        <taxon>Bacteria</taxon>
        <taxon>Pseudomonadati</taxon>
        <taxon>Chlorobiota</taxon>
        <taxon>Chlorobiia</taxon>
        <taxon>Chlorobiales</taxon>
        <taxon>Chlorobiaceae</taxon>
        <taxon>Chlorobaculum</taxon>
    </lineage>
</organism>
<evidence type="ECO:0000255" key="1">
    <source>
        <dbReference type="HAMAP-Rule" id="MF_02004"/>
    </source>
</evidence>
<name>SYV_CHLTE</name>
<dbReference type="EC" id="6.1.1.9" evidence="1"/>
<dbReference type="EMBL" id="AE006470">
    <property type="protein sequence ID" value="AAM72777.1"/>
    <property type="molecule type" value="Genomic_DNA"/>
</dbReference>
<dbReference type="RefSeq" id="NP_662435.1">
    <property type="nucleotide sequence ID" value="NC_002932.3"/>
</dbReference>
<dbReference type="RefSeq" id="WP_010933216.1">
    <property type="nucleotide sequence ID" value="NC_002932.3"/>
</dbReference>
<dbReference type="SMR" id="Q8KC74"/>
<dbReference type="STRING" id="194439.CT1552"/>
<dbReference type="EnsemblBacteria" id="AAM72777">
    <property type="protein sequence ID" value="AAM72777"/>
    <property type="gene ID" value="CT1552"/>
</dbReference>
<dbReference type="KEGG" id="cte:CT1552"/>
<dbReference type="PATRIC" id="fig|194439.7.peg.1405"/>
<dbReference type="eggNOG" id="COG0525">
    <property type="taxonomic scope" value="Bacteria"/>
</dbReference>
<dbReference type="HOGENOM" id="CLU_001493_0_2_10"/>
<dbReference type="OrthoDB" id="9810365at2"/>
<dbReference type="Proteomes" id="UP000001007">
    <property type="component" value="Chromosome"/>
</dbReference>
<dbReference type="GO" id="GO:0005829">
    <property type="term" value="C:cytosol"/>
    <property type="evidence" value="ECO:0007669"/>
    <property type="project" value="TreeGrafter"/>
</dbReference>
<dbReference type="GO" id="GO:0002161">
    <property type="term" value="F:aminoacyl-tRNA deacylase activity"/>
    <property type="evidence" value="ECO:0007669"/>
    <property type="project" value="InterPro"/>
</dbReference>
<dbReference type="GO" id="GO:0005524">
    <property type="term" value="F:ATP binding"/>
    <property type="evidence" value="ECO:0007669"/>
    <property type="project" value="UniProtKB-UniRule"/>
</dbReference>
<dbReference type="GO" id="GO:0004832">
    <property type="term" value="F:valine-tRNA ligase activity"/>
    <property type="evidence" value="ECO:0007669"/>
    <property type="project" value="UniProtKB-UniRule"/>
</dbReference>
<dbReference type="GO" id="GO:0006438">
    <property type="term" value="P:valyl-tRNA aminoacylation"/>
    <property type="evidence" value="ECO:0007669"/>
    <property type="project" value="UniProtKB-UniRule"/>
</dbReference>
<dbReference type="CDD" id="cd07962">
    <property type="entry name" value="Anticodon_Ia_Val"/>
    <property type="match status" value="1"/>
</dbReference>
<dbReference type="CDD" id="cd00817">
    <property type="entry name" value="ValRS_core"/>
    <property type="match status" value="1"/>
</dbReference>
<dbReference type="FunFam" id="1.10.287.380:FF:000001">
    <property type="entry name" value="Valine--tRNA ligase"/>
    <property type="match status" value="1"/>
</dbReference>
<dbReference type="FunFam" id="3.40.50.620:FF:000032">
    <property type="entry name" value="Valine--tRNA ligase"/>
    <property type="match status" value="1"/>
</dbReference>
<dbReference type="FunFam" id="3.40.50.620:FF:000098">
    <property type="entry name" value="Valine--tRNA ligase"/>
    <property type="match status" value="1"/>
</dbReference>
<dbReference type="Gene3D" id="3.40.50.620">
    <property type="entry name" value="HUPs"/>
    <property type="match status" value="2"/>
</dbReference>
<dbReference type="Gene3D" id="1.10.730.10">
    <property type="entry name" value="Isoleucyl-tRNA Synthetase, Domain 1"/>
    <property type="match status" value="1"/>
</dbReference>
<dbReference type="Gene3D" id="1.10.287.380">
    <property type="entry name" value="Valyl-tRNA synthetase, C-terminal domain"/>
    <property type="match status" value="1"/>
</dbReference>
<dbReference type="Gene3D" id="3.90.740.10">
    <property type="entry name" value="Valyl/Leucyl/Isoleucyl-tRNA synthetase, editing domain"/>
    <property type="match status" value="1"/>
</dbReference>
<dbReference type="HAMAP" id="MF_02004">
    <property type="entry name" value="Val_tRNA_synth_type1"/>
    <property type="match status" value="1"/>
</dbReference>
<dbReference type="InterPro" id="IPR001412">
    <property type="entry name" value="aa-tRNA-synth_I_CS"/>
</dbReference>
<dbReference type="InterPro" id="IPR002300">
    <property type="entry name" value="aa-tRNA-synth_Ia"/>
</dbReference>
<dbReference type="InterPro" id="IPR033705">
    <property type="entry name" value="Anticodon_Ia_Val"/>
</dbReference>
<dbReference type="InterPro" id="IPR013155">
    <property type="entry name" value="M/V/L/I-tRNA-synth_anticd-bd"/>
</dbReference>
<dbReference type="InterPro" id="IPR014729">
    <property type="entry name" value="Rossmann-like_a/b/a_fold"/>
</dbReference>
<dbReference type="InterPro" id="IPR010978">
    <property type="entry name" value="tRNA-bd_arm"/>
</dbReference>
<dbReference type="InterPro" id="IPR009080">
    <property type="entry name" value="tRNAsynth_Ia_anticodon-bd"/>
</dbReference>
<dbReference type="InterPro" id="IPR037118">
    <property type="entry name" value="Val-tRNA_synth_C_sf"/>
</dbReference>
<dbReference type="InterPro" id="IPR019499">
    <property type="entry name" value="Val-tRNA_synth_tRNA-bd"/>
</dbReference>
<dbReference type="InterPro" id="IPR009008">
    <property type="entry name" value="Val/Leu/Ile-tRNA-synth_edit"/>
</dbReference>
<dbReference type="InterPro" id="IPR002303">
    <property type="entry name" value="Valyl-tRNA_ligase"/>
</dbReference>
<dbReference type="NCBIfam" id="NF004349">
    <property type="entry name" value="PRK05729.1"/>
    <property type="match status" value="1"/>
</dbReference>
<dbReference type="NCBIfam" id="TIGR00422">
    <property type="entry name" value="valS"/>
    <property type="match status" value="1"/>
</dbReference>
<dbReference type="PANTHER" id="PTHR11946:SF93">
    <property type="entry name" value="VALINE--TRNA LIGASE, CHLOROPLASTIC_MITOCHONDRIAL 2"/>
    <property type="match status" value="1"/>
</dbReference>
<dbReference type="PANTHER" id="PTHR11946">
    <property type="entry name" value="VALYL-TRNA SYNTHETASES"/>
    <property type="match status" value="1"/>
</dbReference>
<dbReference type="Pfam" id="PF08264">
    <property type="entry name" value="Anticodon_1"/>
    <property type="match status" value="1"/>
</dbReference>
<dbReference type="Pfam" id="PF00133">
    <property type="entry name" value="tRNA-synt_1"/>
    <property type="match status" value="1"/>
</dbReference>
<dbReference type="Pfam" id="PF10458">
    <property type="entry name" value="Val_tRNA-synt_C"/>
    <property type="match status" value="1"/>
</dbReference>
<dbReference type="PRINTS" id="PR00986">
    <property type="entry name" value="TRNASYNTHVAL"/>
</dbReference>
<dbReference type="SUPFAM" id="SSF47323">
    <property type="entry name" value="Anticodon-binding domain of a subclass of class I aminoacyl-tRNA synthetases"/>
    <property type="match status" value="1"/>
</dbReference>
<dbReference type="SUPFAM" id="SSF52374">
    <property type="entry name" value="Nucleotidylyl transferase"/>
    <property type="match status" value="1"/>
</dbReference>
<dbReference type="SUPFAM" id="SSF46589">
    <property type="entry name" value="tRNA-binding arm"/>
    <property type="match status" value="1"/>
</dbReference>
<dbReference type="SUPFAM" id="SSF50677">
    <property type="entry name" value="ValRS/IleRS/LeuRS editing domain"/>
    <property type="match status" value="1"/>
</dbReference>
<dbReference type="PROSITE" id="PS00178">
    <property type="entry name" value="AA_TRNA_LIGASE_I"/>
    <property type="match status" value="1"/>
</dbReference>
<protein>
    <recommendedName>
        <fullName evidence="1">Valine--tRNA ligase</fullName>
        <ecNumber evidence="1">6.1.1.9</ecNumber>
    </recommendedName>
    <alternativeName>
        <fullName evidence="1">Valyl-tRNA synthetase</fullName>
        <shortName evidence="1">ValRS</shortName>
    </alternativeName>
</protein>
<feature type="chain" id="PRO_0000224459" description="Valine--tRNA ligase">
    <location>
        <begin position="1"/>
        <end position="901"/>
    </location>
</feature>
<feature type="coiled-coil region" evidence="1">
    <location>
        <begin position="831"/>
        <end position="901"/>
    </location>
</feature>
<feature type="short sequence motif" description="'KMSKS' region">
    <location>
        <begin position="536"/>
        <end position="540"/>
    </location>
</feature>
<feature type="binding site" evidence="1">
    <location>
        <position position="539"/>
    </location>
    <ligand>
        <name>ATP</name>
        <dbReference type="ChEBI" id="CHEBI:30616"/>
    </ligand>
</feature>
<sequence length="901" mass="102951">MSDHSAQNLEKTYNHHEVEERWRSAHWEAIGTFHAEHSRVLKEGATPYTVLMPPPNVTGSLTLGHVLNHTLQDIFIRYARMMGKEALWLPGTDHAGIATQTVVEKKLRKEGVTRHDLGRRDFLDKVWEWREEYGGLILRQLRKLGISCDWRRNLFTMDERASEAVINTFVALYREGLIYRGRRIINWCPVSQTALSDEEVIMKSRRDKLVYISYPLAKDPTRSITIATVRPETILADVAIAVNPNDERYADLIGELVIVPIAGRHVPVIADDYVDIEFGTGALKITPAHDPNDYEVAKRHNLPVFSVIGKDARMTDECGYAGMDRFDARDKIVADLAELGYLVKLEEYEHNVGYSERADVVVEPYLSEQWFVKMQPLAEPALKVVNDGEIRFHPEHWINTYRHWMENIQDWCISRQLWWGHRIPAWYDDKGNVWVASSYEEACHLAGTDKLSQDEDVLDTWFSSWLWPLTTLGWTGPHSDNDDLRAFYPTDTLVTGPDIIFFWVARMIMAGLHFKGDVPFRDVYFTSIIRDMKGRKLSKSLGNSPDPLKVIDTYGTDALRFTIVYIAPLGQDVLFGEEKCELGRNFATKIWNASRFVFMQREKLFATREEFVEAFANFTPQRELMSSAGRWLMSRYNAMLERYHQAMANFKVNDMVKIVHEFFWGDYCDWYVEALKSELTGDITEERGRHAVCLAVSVLEGVLKALHPVMPFITDEIWHAIAPRSAEETIATEAMPQPDASWRGEDAAAFDLVRNMVSEIRSLRSAFNVPHDLRAQAVIRASSPAALVALQTGRAIFPAMTKCEVELGESVERPAHSAASVVDGNELFIKLEGLISFEKEKQRLEKEITKVTAYIESLEKKLSNEKFVSNAPADVVAKEKEKLEESRSMVLKLQGNLEVLS</sequence>
<keyword id="KW-0030">Aminoacyl-tRNA synthetase</keyword>
<keyword id="KW-0067">ATP-binding</keyword>
<keyword id="KW-0175">Coiled coil</keyword>
<keyword id="KW-0963">Cytoplasm</keyword>
<keyword id="KW-0436">Ligase</keyword>
<keyword id="KW-0547">Nucleotide-binding</keyword>
<keyword id="KW-0648">Protein biosynthesis</keyword>
<keyword id="KW-1185">Reference proteome</keyword>